<name>PSBZ_NICSY</name>
<sequence>MTLAFQLAVFALIATSLILLISVPVVFASPDGWSSNKNVVFSGTSLWIGLVFLVGILNSLIS</sequence>
<accession>Q3C1I1</accession>
<proteinExistence type="inferred from homology"/>
<protein>
    <recommendedName>
        <fullName evidence="1">Photosystem II reaction center protein Z</fullName>
        <shortName evidence="1">PSII-Z</shortName>
    </recommendedName>
</protein>
<geneLocation type="chloroplast"/>
<reference key="1">
    <citation type="journal article" date="2006" name="Mol. Genet. Genomics">
        <title>The chloroplast genome of Nicotiana sylvestris and Nicotiana tomentosiformis: complete sequencing confirms that the Nicotiana sylvestris progenitor is the maternal genome donor of Nicotiana tabacum.</title>
        <authorList>
            <person name="Yukawa M."/>
            <person name="Tsudzuki T."/>
            <person name="Sugiura M."/>
        </authorList>
    </citation>
    <scope>NUCLEOTIDE SEQUENCE [LARGE SCALE GENOMIC DNA]</scope>
</reference>
<evidence type="ECO:0000255" key="1">
    <source>
        <dbReference type="HAMAP-Rule" id="MF_00644"/>
    </source>
</evidence>
<feature type="chain" id="PRO_0000277224" description="Photosystem II reaction center protein Z">
    <location>
        <begin position="1"/>
        <end position="62"/>
    </location>
</feature>
<feature type="transmembrane region" description="Helical" evidence="1">
    <location>
        <begin position="8"/>
        <end position="28"/>
    </location>
</feature>
<feature type="transmembrane region" description="Helical" evidence="1">
    <location>
        <begin position="41"/>
        <end position="61"/>
    </location>
</feature>
<organism>
    <name type="scientific">Nicotiana sylvestris</name>
    <name type="common">Wood tobacco</name>
    <name type="synonym">South American tobacco</name>
    <dbReference type="NCBI Taxonomy" id="4096"/>
    <lineage>
        <taxon>Eukaryota</taxon>
        <taxon>Viridiplantae</taxon>
        <taxon>Streptophyta</taxon>
        <taxon>Embryophyta</taxon>
        <taxon>Tracheophyta</taxon>
        <taxon>Spermatophyta</taxon>
        <taxon>Magnoliopsida</taxon>
        <taxon>eudicotyledons</taxon>
        <taxon>Gunneridae</taxon>
        <taxon>Pentapetalae</taxon>
        <taxon>asterids</taxon>
        <taxon>lamiids</taxon>
        <taxon>Solanales</taxon>
        <taxon>Solanaceae</taxon>
        <taxon>Nicotianoideae</taxon>
        <taxon>Nicotianeae</taxon>
        <taxon>Nicotiana</taxon>
    </lineage>
</organism>
<gene>
    <name evidence="1" type="primary">psbZ</name>
</gene>
<comment type="function">
    <text evidence="1">May control the interaction of photosystem II (PSII) cores with the light-harvesting antenna, regulates electron flow through the 2 photosystem reaction centers. PSII is a light-driven water plastoquinone oxidoreductase, using light energy to abstract electrons from H(2)O, generating a proton gradient subsequently used for ATP formation.</text>
</comment>
<comment type="subunit">
    <text evidence="1">PSII is composed of 1 copy each of membrane proteins PsbA, PsbB, PsbC, PsbD, PsbE, PsbF, PsbH, PsbI, PsbJ, PsbK, PsbL, PsbM, PsbT, PsbY, PsbZ, Psb30/Ycf12, at least 3 peripheral proteins of the oxygen-evolving complex and a large number of cofactors. It forms dimeric complexes.</text>
</comment>
<comment type="subcellular location">
    <subcellularLocation>
        <location evidence="1">Plastid</location>
        <location evidence="1">Chloroplast thylakoid membrane</location>
        <topology evidence="1">Multi-pass membrane protein</topology>
    </subcellularLocation>
</comment>
<comment type="similarity">
    <text evidence="1">Belongs to the PsbZ family.</text>
</comment>
<dbReference type="EMBL" id="AB237912">
    <property type="protein sequence ID" value="BAE46646.1"/>
    <property type="molecule type" value="Genomic_DNA"/>
</dbReference>
<dbReference type="RefSeq" id="YP_358671.1">
    <property type="nucleotide sequence ID" value="NC_007500.1"/>
</dbReference>
<dbReference type="SMR" id="Q3C1I1"/>
<dbReference type="GeneID" id="3735115"/>
<dbReference type="KEGG" id="nsy:3735115"/>
<dbReference type="OrthoDB" id="27508at4085"/>
<dbReference type="Proteomes" id="UP000189701">
    <property type="component" value="Chloroplast Pltd"/>
</dbReference>
<dbReference type="GO" id="GO:0009535">
    <property type="term" value="C:chloroplast thylakoid membrane"/>
    <property type="evidence" value="ECO:0007669"/>
    <property type="project" value="UniProtKB-SubCell"/>
</dbReference>
<dbReference type="GO" id="GO:0009539">
    <property type="term" value="C:photosystem II reaction center"/>
    <property type="evidence" value="ECO:0007669"/>
    <property type="project" value="InterPro"/>
</dbReference>
<dbReference type="GO" id="GO:0015979">
    <property type="term" value="P:photosynthesis"/>
    <property type="evidence" value="ECO:0007669"/>
    <property type="project" value="UniProtKB-UniRule"/>
</dbReference>
<dbReference type="GO" id="GO:0042549">
    <property type="term" value="P:photosystem II stabilization"/>
    <property type="evidence" value="ECO:0007669"/>
    <property type="project" value="InterPro"/>
</dbReference>
<dbReference type="FunFam" id="1.10.287.740:FF:000001">
    <property type="entry name" value="Photosystem II reaction center protein Z"/>
    <property type="match status" value="1"/>
</dbReference>
<dbReference type="Gene3D" id="1.10.287.740">
    <property type="entry name" value="Photosystem II PsbZ, reaction centre"/>
    <property type="match status" value="1"/>
</dbReference>
<dbReference type="HAMAP" id="MF_00644">
    <property type="entry name" value="PSII_PsbZ"/>
    <property type="match status" value="1"/>
</dbReference>
<dbReference type="InterPro" id="IPR002644">
    <property type="entry name" value="PSII_PsbZ"/>
</dbReference>
<dbReference type="InterPro" id="IPR036512">
    <property type="entry name" value="PSII_PsbZ_sf"/>
</dbReference>
<dbReference type="NCBIfam" id="TIGR03043">
    <property type="entry name" value="PS_II_psbZ"/>
    <property type="match status" value="1"/>
</dbReference>
<dbReference type="PANTHER" id="PTHR34971">
    <property type="entry name" value="PHOTOSYSTEM II REACTION CENTER PROTEIN Z"/>
    <property type="match status" value="1"/>
</dbReference>
<dbReference type="PANTHER" id="PTHR34971:SF2">
    <property type="entry name" value="PHOTOSYSTEM II REACTION CENTER PROTEIN Z"/>
    <property type="match status" value="1"/>
</dbReference>
<dbReference type="Pfam" id="PF01737">
    <property type="entry name" value="Ycf9"/>
    <property type="match status" value="1"/>
</dbReference>
<dbReference type="SUPFAM" id="SSF161055">
    <property type="entry name" value="PsbZ-like"/>
    <property type="match status" value="1"/>
</dbReference>
<keyword id="KW-0150">Chloroplast</keyword>
<keyword id="KW-0472">Membrane</keyword>
<keyword id="KW-0602">Photosynthesis</keyword>
<keyword id="KW-0604">Photosystem II</keyword>
<keyword id="KW-0934">Plastid</keyword>
<keyword id="KW-0674">Reaction center</keyword>
<keyword id="KW-1185">Reference proteome</keyword>
<keyword id="KW-0793">Thylakoid</keyword>
<keyword id="KW-0812">Transmembrane</keyword>
<keyword id="KW-1133">Transmembrane helix</keyword>